<feature type="chain" id="PRO_0000208683" description="Cytochrome c6">
    <location>
        <begin position="1"/>
        <end position="81"/>
    </location>
</feature>
<feature type="binding site" description="covalent" evidence="1">
    <location>
        <position position="10"/>
    </location>
    <ligand>
        <name>heme c</name>
        <dbReference type="ChEBI" id="CHEBI:61717"/>
    </ligand>
</feature>
<feature type="binding site" description="covalent" evidence="1">
    <location>
        <position position="13"/>
    </location>
    <ligand>
        <name>heme c</name>
        <dbReference type="ChEBI" id="CHEBI:61717"/>
    </ligand>
</feature>
<feature type="binding site" description="axial binding residue" evidence="1">
    <location>
        <position position="14"/>
    </location>
    <ligand>
        <name>heme c</name>
        <dbReference type="ChEBI" id="CHEBI:61717"/>
    </ligand>
    <ligandPart>
        <name>Fe</name>
        <dbReference type="ChEBI" id="CHEBI:18248"/>
    </ligandPart>
</feature>
<feature type="binding site" description="axial binding residue" evidence="1">
    <location>
        <position position="54"/>
    </location>
    <ligand>
        <name>heme c</name>
        <dbReference type="ChEBI" id="CHEBI:61717"/>
    </ligand>
    <ligandPart>
        <name>Fe</name>
        <dbReference type="ChEBI" id="CHEBI:18248"/>
    </ligandPart>
</feature>
<feature type="sequence conflict" description="In Ref. 2; AA sequence." evidence="2" ref="2">
    <original>KY</original>
    <variation>G</variation>
    <location>
        <begin position="34"/>
        <end position="35"/>
    </location>
</feature>
<feature type="sequence conflict" description="In Ref. 2; AA sequence." evidence="2" ref="2">
    <original>D</original>
    <variation>N</variation>
    <location>
        <position position="38"/>
    </location>
</feature>
<feature type="sequence conflict" description="In Ref. 2; AA sequence." evidence="2" ref="2">
    <original>M</original>
    <variation>K</variation>
    <location>
        <position position="51"/>
    </location>
</feature>
<feature type="sequence conflict" description="In Ref. 2; AA sequence." evidence="2" ref="2">
    <original>S</original>
    <variation>G</variation>
    <location>
        <position position="62"/>
    </location>
</feature>
<feature type="sequence conflict" description="In Ref. 2; AA sequence." evidence="2" ref="2">
    <original>Q</original>
    <variation>E</variation>
    <location>
        <position position="76"/>
    </location>
</feature>
<keyword id="KW-0903">Direct protein sequencing</keyword>
<keyword id="KW-0249">Electron transport</keyword>
<keyword id="KW-0349">Heme</keyword>
<keyword id="KW-0408">Iron</keyword>
<keyword id="KW-0479">Metal-binding</keyword>
<keyword id="KW-0602">Photosynthesis</keyword>
<keyword id="KW-0793">Thylakoid</keyword>
<keyword id="KW-0813">Transport</keyword>
<sequence length="81" mass="8421">DGASIFSANCASCHMGGKNVVNAAKTLKKEDLVKYGKDSVEAIVTQVTKGMGAMPAFGGRLSAEDIEAVANYVLAQAEKGW</sequence>
<name>CYC6_MICAE</name>
<protein>
    <recommendedName>
        <fullName>Cytochrome c6</fullName>
    </recommendedName>
    <alternativeName>
        <fullName>Cytochrome c-553</fullName>
    </alternativeName>
    <alternativeName>
        <fullName>Cytochrome c553</fullName>
    </alternativeName>
    <alternativeName>
        <fullName>Soluble cytochrome f</fullName>
    </alternativeName>
</protein>
<comment type="function">
    <text>Functions as an electron carrier between membrane-bound cytochrome b6-f and photosystem I in oxygenic photosynthesis.</text>
</comment>
<comment type="subunit">
    <text evidence="1">Monomer.</text>
</comment>
<comment type="subcellular location">
    <subcellularLocation>
        <location evidence="2">Cellular thylakoid lumen</location>
    </subcellularLocation>
</comment>
<comment type="PTM">
    <text evidence="1">Binds 1 heme c group covalently per subunit.</text>
</comment>
<comment type="similarity">
    <text evidence="2">Belongs to the cytochrome c family. PetJ subfamily.</text>
</comment>
<proteinExistence type="evidence at protein level"/>
<accession>P00112</accession>
<evidence type="ECO:0000250" key="1"/>
<evidence type="ECO:0000305" key="2"/>
<reference key="1">
    <citation type="journal article" date="1989" name="Arch. Biochem. Biophys.">
        <title>The amino acid sequence of cytochrome c553 from Microcystis aeruginosa.</title>
        <authorList>
            <person name="Cohn C.L."/>
            <person name="Hermodson M.A."/>
            <person name="Krogmann D.W."/>
        </authorList>
    </citation>
    <scope>PROTEIN SEQUENCE</scope>
</reference>
<reference key="2">
    <citation type="journal article" date="1982" name="J. Biol. Chem.">
        <title>Structure and heme environment of ferrocytochrome c553 from 1H NMR studies.</title>
        <authorList>
            <person name="Ulrich E.L."/>
            <person name="Krogmann D.W."/>
            <person name="Markley J.L."/>
        </authorList>
    </citation>
    <scope>PROTEIN SEQUENCE</scope>
</reference>
<gene>
    <name type="primary">petJ</name>
</gene>
<dbReference type="PIR" id="A00104">
    <property type="entry name" value="CCIA6"/>
</dbReference>
<dbReference type="PIR" id="S03859">
    <property type="entry name" value="S03859"/>
</dbReference>
<dbReference type="SMR" id="P00112"/>
<dbReference type="GO" id="GO:0031979">
    <property type="term" value="C:plasma membrane-derived thylakoid lumen"/>
    <property type="evidence" value="ECO:0007669"/>
    <property type="project" value="UniProtKB-SubCell"/>
</dbReference>
<dbReference type="GO" id="GO:0009055">
    <property type="term" value="F:electron transfer activity"/>
    <property type="evidence" value="ECO:0007669"/>
    <property type="project" value="UniProtKB-UniRule"/>
</dbReference>
<dbReference type="GO" id="GO:0020037">
    <property type="term" value="F:heme binding"/>
    <property type="evidence" value="ECO:0007669"/>
    <property type="project" value="InterPro"/>
</dbReference>
<dbReference type="GO" id="GO:0005506">
    <property type="term" value="F:iron ion binding"/>
    <property type="evidence" value="ECO:0007669"/>
    <property type="project" value="InterPro"/>
</dbReference>
<dbReference type="GO" id="GO:0015979">
    <property type="term" value="P:photosynthesis"/>
    <property type="evidence" value="ECO:0007669"/>
    <property type="project" value="UniProtKB-UniRule"/>
</dbReference>
<dbReference type="FunFam" id="1.10.760.10:FF:000038">
    <property type="entry name" value="Cytochrome c6"/>
    <property type="match status" value="1"/>
</dbReference>
<dbReference type="Gene3D" id="1.10.760.10">
    <property type="entry name" value="Cytochrome c-like domain"/>
    <property type="match status" value="1"/>
</dbReference>
<dbReference type="HAMAP" id="MF_00594">
    <property type="entry name" value="Cytc_PetJ"/>
    <property type="match status" value="1"/>
</dbReference>
<dbReference type="InterPro" id="IPR009056">
    <property type="entry name" value="Cyt_c-like_dom"/>
</dbReference>
<dbReference type="InterPro" id="IPR036909">
    <property type="entry name" value="Cyt_c-like_dom_sf"/>
</dbReference>
<dbReference type="InterPro" id="IPR023655">
    <property type="entry name" value="Cyt_C6"/>
</dbReference>
<dbReference type="InterPro" id="IPR008168">
    <property type="entry name" value="Cyt_C_IC"/>
</dbReference>
<dbReference type="NCBIfam" id="NF045930">
    <property type="entry name" value="Cytc6PetJCyano"/>
    <property type="match status" value="1"/>
</dbReference>
<dbReference type="PANTHER" id="PTHR34688">
    <property type="entry name" value="CYTOCHROME C6, CHLOROPLASTIC"/>
    <property type="match status" value="1"/>
</dbReference>
<dbReference type="PANTHER" id="PTHR34688:SF2">
    <property type="entry name" value="CYTOCHROME C6, CHLOROPLASTIC"/>
    <property type="match status" value="1"/>
</dbReference>
<dbReference type="Pfam" id="PF13442">
    <property type="entry name" value="Cytochrome_CBB3"/>
    <property type="match status" value="1"/>
</dbReference>
<dbReference type="PRINTS" id="PR00605">
    <property type="entry name" value="CYTCHROMECIC"/>
</dbReference>
<dbReference type="SUPFAM" id="SSF46626">
    <property type="entry name" value="Cytochrome c"/>
    <property type="match status" value="1"/>
</dbReference>
<dbReference type="PROSITE" id="PS51007">
    <property type="entry name" value="CYTC"/>
    <property type="match status" value="1"/>
</dbReference>
<organism>
    <name type="scientific">Microcystis aeruginosa</name>
    <dbReference type="NCBI Taxonomy" id="1126"/>
    <lineage>
        <taxon>Bacteria</taxon>
        <taxon>Bacillati</taxon>
        <taxon>Cyanobacteriota</taxon>
        <taxon>Cyanophyceae</taxon>
        <taxon>Oscillatoriophycideae</taxon>
        <taxon>Chroococcales</taxon>
        <taxon>Microcystaceae</taxon>
        <taxon>Microcystis</taxon>
    </lineage>
</organism>